<feature type="chain" id="PRO_0000260215" description="Phosphatidylinositol-3,5-bisphosphate 3-phosphatase MTMR14">
    <location>
        <begin position="1"/>
        <end position="648"/>
    </location>
</feature>
<feature type="region of interest" description="Disordered" evidence="4">
    <location>
        <begin position="1"/>
        <end position="27"/>
    </location>
</feature>
<feature type="region of interest" description="Disordered" evidence="4">
    <location>
        <begin position="471"/>
        <end position="544"/>
    </location>
</feature>
<feature type="compositionally biased region" description="Low complexity" evidence="4">
    <location>
        <begin position="1"/>
        <end position="19"/>
    </location>
</feature>
<feature type="compositionally biased region" description="Basic and acidic residues" evidence="4">
    <location>
        <begin position="494"/>
        <end position="506"/>
    </location>
</feature>
<feature type="active site" description="Phosphocysteine intermediate" evidence="1">
    <location>
        <position position="329"/>
    </location>
</feature>
<feature type="binding site" evidence="1">
    <location>
        <position position="332"/>
    </location>
    <ligand>
        <name>a 1,2-diacyl-sn-glycero-3-phospho-(1D-myo-inositol-3,5-bisphosphate)</name>
        <dbReference type="ChEBI" id="CHEBI:57923"/>
    </ligand>
</feature>
<feature type="binding site" evidence="1">
    <location>
        <position position="332"/>
    </location>
    <ligand>
        <name>a 1,2-diacyl-sn-glycero-3-phospho-(1D-myo-inositol-3-phosphate)</name>
        <dbReference type="ChEBI" id="CHEBI:58088"/>
    </ligand>
</feature>
<feature type="binding site" evidence="1">
    <location>
        <position position="333"/>
    </location>
    <ligand>
        <name>a 1,2-diacyl-sn-glycero-3-phospho-(1D-myo-inositol-3,5-bisphosphate)</name>
        <dbReference type="ChEBI" id="CHEBI:57923"/>
    </ligand>
</feature>
<feature type="binding site" evidence="1">
    <location>
        <position position="333"/>
    </location>
    <ligand>
        <name>a 1,2-diacyl-sn-glycero-3-phospho-(1D-myo-inositol-3-phosphate)</name>
        <dbReference type="ChEBI" id="CHEBI:58088"/>
    </ligand>
</feature>
<feature type="binding site" evidence="1">
    <location>
        <position position="334"/>
    </location>
    <ligand>
        <name>a 1,2-diacyl-sn-glycero-3-phospho-(1D-myo-inositol-3,5-bisphosphate)</name>
        <dbReference type="ChEBI" id="CHEBI:57923"/>
    </ligand>
</feature>
<feature type="binding site" evidence="1">
    <location>
        <position position="334"/>
    </location>
    <ligand>
        <name>a 1,2-diacyl-sn-glycero-3-phospho-(1D-myo-inositol-3-phosphate)</name>
        <dbReference type="ChEBI" id="CHEBI:58088"/>
    </ligand>
</feature>
<feature type="binding site" evidence="1">
    <location>
        <position position="335"/>
    </location>
    <ligand>
        <name>a 1,2-diacyl-sn-glycero-3-phospho-(1D-myo-inositol-3,5-bisphosphate)</name>
        <dbReference type="ChEBI" id="CHEBI:57923"/>
    </ligand>
</feature>
<feature type="binding site" evidence="1">
    <location>
        <position position="335"/>
    </location>
    <ligand>
        <name>a 1,2-diacyl-sn-glycero-3-phospho-(1D-myo-inositol-3-phosphate)</name>
        <dbReference type="ChEBI" id="CHEBI:58088"/>
    </ligand>
</feature>
<feature type="binding site" evidence="1">
    <location>
        <position position="381"/>
    </location>
    <ligand>
        <name>a 1,2-diacyl-sn-glycero-3-phospho-(1D-myo-inositol-3,5-bisphosphate)</name>
        <dbReference type="ChEBI" id="CHEBI:57923"/>
    </ligand>
</feature>
<feature type="binding site" evidence="1">
    <location>
        <position position="381"/>
    </location>
    <ligand>
        <name>a 1,2-diacyl-sn-glycero-3-phospho-(1D-myo-inositol-3-phosphate)</name>
        <dbReference type="ChEBI" id="CHEBI:58088"/>
    </ligand>
</feature>
<feature type="modified residue" description="N6-acetyllysine" evidence="2">
    <location>
        <position position="193"/>
    </location>
</feature>
<feature type="modified residue" description="Phosphoserine" evidence="2">
    <location>
        <position position="516"/>
    </location>
</feature>
<feature type="modified residue" description="Phosphoserine" evidence="9">
    <location>
        <position position="528"/>
    </location>
</feature>
<feature type="modified residue" description="Phosphoserine" evidence="2">
    <location>
        <position position="578"/>
    </location>
</feature>
<feature type="modified residue" description="Phosphoserine" evidence="2">
    <location>
        <position position="622"/>
    </location>
</feature>
<feature type="modified residue" description="Omega-N-methylarginine" evidence="2">
    <location>
        <position position="636"/>
    </location>
</feature>
<feature type="glycosylation site" description="N-linked (GlcNAc...) asparagine" evidence="3">
    <location>
        <position position="225"/>
    </location>
</feature>
<feature type="glycosylation site" description="N-linked (GlcNAc...) asparagine" evidence="3">
    <location>
        <position position="240"/>
    </location>
</feature>
<feature type="glycosylation site" description="N-linked (GlcNAc...) asparagine" evidence="3">
    <location>
        <position position="517"/>
    </location>
</feature>
<reference key="1">
    <citation type="journal article" date="2004" name="Genome Res.">
        <title>The status, quality, and expansion of the NIH full-length cDNA project: the Mammalian Gene Collection (MGC).</title>
        <authorList>
            <consortium name="The MGC Project Team"/>
        </authorList>
    </citation>
    <scope>NUCLEOTIDE SEQUENCE [LARGE SCALE MRNA]</scope>
    <source>
        <strain>Czech II</strain>
        <tissue>Mammary tumor</tissue>
    </source>
</reference>
<reference key="2">
    <citation type="journal article" date="2006" name="Hum. Mol. Genet.">
        <title>A novel PtdIns3P and PtdIns(3,5)P2 phosphatase with an inactivating variant in centronuclear myopathy.</title>
        <authorList>
            <person name="Tosch V."/>
            <person name="Rohde H.M."/>
            <person name="Tronchere H."/>
            <person name="Zanoteli E."/>
            <person name="Monroy N."/>
            <person name="Kretz C."/>
            <person name="Dondaine N."/>
            <person name="Payrastre B."/>
            <person name="Mandel J.-L."/>
            <person name="Laporte J."/>
        </authorList>
    </citation>
    <scope>DEVELOPMENTAL STAGE</scope>
</reference>
<reference key="3">
    <citation type="journal article" date="2010" name="Cell">
        <title>A tissue-specific atlas of mouse protein phosphorylation and expression.</title>
        <authorList>
            <person name="Huttlin E.L."/>
            <person name="Jedrychowski M.P."/>
            <person name="Elias J.E."/>
            <person name="Goswami T."/>
            <person name="Rad R."/>
            <person name="Beausoleil S.A."/>
            <person name="Villen J."/>
            <person name="Haas W."/>
            <person name="Sowa M.E."/>
            <person name="Gygi S.P."/>
        </authorList>
    </citation>
    <scope>PHOSPHORYLATION [LARGE SCALE ANALYSIS] AT SER-528</scope>
    <scope>IDENTIFICATION BY MASS SPECTROMETRY [LARGE SCALE ANALYSIS]</scope>
    <source>
        <tissue>Spleen</tissue>
    </source>
</reference>
<dbReference type="EC" id="3.1.3.95" evidence="2"/>
<dbReference type="EMBL" id="BC018294">
    <property type="protein sequence ID" value="AAH18294.1"/>
    <property type="status" value="ALT_INIT"/>
    <property type="molecule type" value="mRNA"/>
</dbReference>
<dbReference type="CCDS" id="CCDS20412.2"/>
<dbReference type="RefSeq" id="NP_081125.2">
    <property type="nucleotide sequence ID" value="NM_026849.2"/>
</dbReference>
<dbReference type="RefSeq" id="XP_006506888.1">
    <property type="nucleotide sequence ID" value="XM_006506825.1"/>
</dbReference>
<dbReference type="BioGRID" id="220681">
    <property type="interactions" value="1"/>
</dbReference>
<dbReference type="FunCoup" id="Q8VEL2">
    <property type="interactions" value="1371"/>
</dbReference>
<dbReference type="STRING" id="10090.ENSMUSP00000108771"/>
<dbReference type="GlyCosmos" id="Q8VEL2">
    <property type="glycosylation" value="3 sites, No reported glycans"/>
</dbReference>
<dbReference type="GlyGen" id="Q8VEL2">
    <property type="glycosylation" value="3 sites, 1 N-linked glycan (1 site)"/>
</dbReference>
<dbReference type="iPTMnet" id="Q8VEL2"/>
<dbReference type="PhosphoSitePlus" id="Q8VEL2"/>
<dbReference type="PaxDb" id="10090-ENSMUSP00000108771"/>
<dbReference type="PeptideAtlas" id="Q8VEL2"/>
<dbReference type="ProteomicsDB" id="286082"/>
<dbReference type="Pumba" id="Q8VEL2"/>
<dbReference type="Antibodypedia" id="25426">
    <property type="antibodies" value="274 antibodies from 26 providers"/>
</dbReference>
<dbReference type="DNASU" id="97287"/>
<dbReference type="Ensembl" id="ENSMUST00000113146.9">
    <property type="protein sequence ID" value="ENSMUSP00000108771.3"/>
    <property type="gene ID" value="ENSMUSG00000030269.15"/>
</dbReference>
<dbReference type="GeneID" id="97287"/>
<dbReference type="KEGG" id="mmu:97287"/>
<dbReference type="UCSC" id="uc009dex.2">
    <property type="organism name" value="mouse"/>
</dbReference>
<dbReference type="AGR" id="MGI:1916075"/>
<dbReference type="CTD" id="64419"/>
<dbReference type="MGI" id="MGI:1916075">
    <property type="gene designation" value="Mtmr14"/>
</dbReference>
<dbReference type="VEuPathDB" id="HostDB:ENSMUSG00000030269"/>
<dbReference type="eggNOG" id="ENOG502QQ9R">
    <property type="taxonomic scope" value="Eukaryota"/>
</dbReference>
<dbReference type="GeneTree" id="ENSGT00390000018852"/>
<dbReference type="HOGENOM" id="CLU_016325_2_0_1"/>
<dbReference type="InParanoid" id="Q8VEL2"/>
<dbReference type="OMA" id="CALKTHR"/>
<dbReference type="OrthoDB" id="2408718at2759"/>
<dbReference type="PhylomeDB" id="Q8VEL2"/>
<dbReference type="TreeFam" id="TF324044"/>
<dbReference type="Reactome" id="R-MMU-1632852">
    <property type="pathway name" value="Macroautophagy"/>
</dbReference>
<dbReference type="Reactome" id="R-MMU-1660499">
    <property type="pathway name" value="Synthesis of PIPs at the plasma membrane"/>
</dbReference>
<dbReference type="BioGRID-ORCS" id="97287">
    <property type="hits" value="1 hit in 81 CRISPR screens"/>
</dbReference>
<dbReference type="ChiTaRS" id="Mtmr14">
    <property type="organism name" value="mouse"/>
</dbReference>
<dbReference type="PRO" id="PR:Q8VEL2"/>
<dbReference type="Proteomes" id="UP000000589">
    <property type="component" value="Chromosome 6"/>
</dbReference>
<dbReference type="RNAct" id="Q8VEL2">
    <property type="molecule type" value="protein"/>
</dbReference>
<dbReference type="Bgee" id="ENSMUSG00000030269">
    <property type="expression patterns" value="Expressed in animal zygote and 254 other cell types or tissues"/>
</dbReference>
<dbReference type="ExpressionAtlas" id="Q8VEL2">
    <property type="expression patterns" value="baseline and differential"/>
</dbReference>
<dbReference type="GO" id="GO:0048471">
    <property type="term" value="C:perinuclear region of cytoplasm"/>
    <property type="evidence" value="ECO:0007669"/>
    <property type="project" value="Ensembl"/>
</dbReference>
<dbReference type="GO" id="GO:0001726">
    <property type="term" value="C:ruffle"/>
    <property type="evidence" value="ECO:0007669"/>
    <property type="project" value="Ensembl"/>
</dbReference>
<dbReference type="GO" id="GO:0052629">
    <property type="term" value="F:phosphatidylinositol-3,5-bisphosphate 3-phosphatase activity"/>
    <property type="evidence" value="ECO:0000250"/>
    <property type="project" value="UniProtKB"/>
</dbReference>
<dbReference type="GO" id="GO:0004438">
    <property type="term" value="F:phosphatidylinositol-3-phosphate phosphatase activity"/>
    <property type="evidence" value="ECO:0000250"/>
    <property type="project" value="UniProtKB"/>
</dbReference>
<dbReference type="CDD" id="cd13213">
    <property type="entry name" value="PH-GRAM_MTMR14"/>
    <property type="match status" value="1"/>
</dbReference>
<dbReference type="Gene3D" id="3.90.190.10">
    <property type="entry name" value="Protein tyrosine phosphatase superfamily"/>
    <property type="match status" value="1"/>
</dbReference>
<dbReference type="InterPro" id="IPR039802">
    <property type="entry name" value="MTMR14"/>
</dbReference>
<dbReference type="InterPro" id="IPR039803">
    <property type="entry name" value="MTMR14_PH-GRAM"/>
</dbReference>
<dbReference type="InterPro" id="IPR029021">
    <property type="entry name" value="Prot-tyrosine_phosphatase-like"/>
</dbReference>
<dbReference type="InterPro" id="IPR016130">
    <property type="entry name" value="Tyr_Pase_AS"/>
</dbReference>
<dbReference type="PANTHER" id="PTHR13524">
    <property type="entry name" value="MYOTUBULARIN-RELATED"/>
    <property type="match status" value="1"/>
</dbReference>
<dbReference type="PANTHER" id="PTHR13524:SF2">
    <property type="entry name" value="MYOTUBULARIN-RELATED PROTEIN 14"/>
    <property type="match status" value="1"/>
</dbReference>
<dbReference type="SUPFAM" id="SSF52799">
    <property type="entry name" value="(Phosphotyrosine protein) phosphatases II"/>
    <property type="match status" value="1"/>
</dbReference>
<sequence>MAGARAAAAASAGSTASSGSPPPQEPGLWELLEEFSRTQYRAKDSGGKSGSKVERIEKRCLELFGRDYCFSVIPNVNGDICGHYPRHIVFLEYESSEKEKDTFQSTVQVNKLQDLIHRSKMARCRGRFVCPVILFKGKHICRSATLAGWGELYGRSGYNYLFSGGADDTWASTEDVTEEDFVLRSGDTHLFDKVRGYDIKLLQYLSVKYICDLMVENKKVKFGMNVTSSEKVDKAQRYANFTLLSIPYPGCEFFKEYKDRDYMAEGLIFNWKQDYVDAPLNIPNFLTQSLNIDWSQYQSWDLVQQTQNYLKLLLFIMNRDDDSGLLVHCISGWDRTPLFISLLRLSLWADGLIHTSLKPAEILYLTVAYDWFLFGHMLVDRLSKGEEIFFFCFNFLKHITSEEFCLKTQRRKSLPTRDAGFTVEDICMLRHKDRGSTTSLGSDFSLVLEHSPGAVGSFSYETVELAPAGAPTQAAWRKSHSSSPQSMLWSRPQPSEERLPSHHGLTEAKSSSSSSSNHSDNFFRMGSSPLEVPKPRSVDHPLPGSSLSTDFGSWQLVSGCGSIQDRPVLHTDSSLPFSFQDELPNSCLLTALSDRETRLQEVRSAFLAAYSSTVGLRAATPSPSGAIGGLLEQFARGVGLRGTSTSTL</sequence>
<protein>
    <recommendedName>
        <fullName>Phosphatidylinositol-3,5-bisphosphate 3-phosphatase MTMR14</fullName>
        <ecNumber evidence="2">3.1.3.95</ecNumber>
    </recommendedName>
    <alternativeName>
        <fullName evidence="8">Myotubularin-related protein 14</fullName>
    </alternativeName>
    <alternativeName>
        <fullName evidence="2">Phosphatidylinositol-3-phosphate phosphatase</fullName>
    </alternativeName>
    <alternativeName>
        <fullName evidence="6">mJumpy</fullName>
    </alternativeName>
</protein>
<keyword id="KW-0007">Acetylation</keyword>
<keyword id="KW-0963">Cytoplasm</keyword>
<keyword id="KW-0325">Glycoprotein</keyword>
<keyword id="KW-0378">Hydrolase</keyword>
<keyword id="KW-0488">Methylation</keyword>
<keyword id="KW-0597">Phosphoprotein</keyword>
<keyword id="KW-1185">Reference proteome</keyword>
<organism>
    <name type="scientific">Mus musculus</name>
    <name type="common">Mouse</name>
    <dbReference type="NCBI Taxonomy" id="10090"/>
    <lineage>
        <taxon>Eukaryota</taxon>
        <taxon>Metazoa</taxon>
        <taxon>Chordata</taxon>
        <taxon>Craniata</taxon>
        <taxon>Vertebrata</taxon>
        <taxon>Euteleostomi</taxon>
        <taxon>Mammalia</taxon>
        <taxon>Eutheria</taxon>
        <taxon>Euarchontoglires</taxon>
        <taxon>Glires</taxon>
        <taxon>Rodentia</taxon>
        <taxon>Myomorpha</taxon>
        <taxon>Muroidea</taxon>
        <taxon>Muridae</taxon>
        <taxon>Murinae</taxon>
        <taxon>Mus</taxon>
        <taxon>Mus</taxon>
    </lineage>
</organism>
<gene>
    <name evidence="8" type="primary">Mtmr14</name>
</gene>
<evidence type="ECO:0000250" key="1">
    <source>
        <dbReference type="UniProtKB" id="Q13614"/>
    </source>
</evidence>
<evidence type="ECO:0000250" key="2">
    <source>
        <dbReference type="UniProtKB" id="Q8NCE2"/>
    </source>
</evidence>
<evidence type="ECO:0000255" key="3"/>
<evidence type="ECO:0000256" key="4">
    <source>
        <dbReference type="SAM" id="MobiDB-lite"/>
    </source>
</evidence>
<evidence type="ECO:0000269" key="5">
    <source>
    </source>
</evidence>
<evidence type="ECO:0000303" key="6">
    <source>
    </source>
</evidence>
<evidence type="ECO:0000305" key="7"/>
<evidence type="ECO:0000312" key="8">
    <source>
        <dbReference type="MGI" id="MGI:1916075"/>
    </source>
</evidence>
<evidence type="ECO:0007744" key="9">
    <source>
    </source>
</evidence>
<name>MTMRE_MOUSE</name>
<comment type="function">
    <text evidence="2">Lipid phosphatase that specifically dephosphorylates the D-3 position of phosphatidylinositol 3-phosphate and phosphatidylinositol 3,5-bisphosphate, generating phosphatidylinositol and phosphatidylinositol 5-phosphate.</text>
</comment>
<comment type="catalytic activity">
    <reaction evidence="2">
        <text>a 1,2-diacyl-sn-glycero-3-phospho-(1D-myo-inositol-3,5-bisphosphate) + H2O = a 1,2-diacyl-sn-glycero-3-phospho-(1D-myo-inositol-5-phosphate) + phosphate</text>
        <dbReference type="Rhea" id="RHEA:39019"/>
        <dbReference type="ChEBI" id="CHEBI:15377"/>
        <dbReference type="ChEBI" id="CHEBI:43474"/>
        <dbReference type="ChEBI" id="CHEBI:57795"/>
        <dbReference type="ChEBI" id="CHEBI:57923"/>
        <dbReference type="EC" id="3.1.3.95"/>
    </reaction>
</comment>
<comment type="catalytic activity">
    <reaction evidence="2">
        <text>a 1,2-diacyl-sn-glycero-3-phospho-(1D-myo-inositol-3-phosphate) + H2O = a 1,2-diacyl-sn-glycero-3-phospho-(1D-myo-inositol) + phosphate</text>
        <dbReference type="Rhea" id="RHEA:12316"/>
        <dbReference type="ChEBI" id="CHEBI:15377"/>
        <dbReference type="ChEBI" id="CHEBI:43474"/>
        <dbReference type="ChEBI" id="CHEBI:57880"/>
        <dbReference type="ChEBI" id="CHEBI:58088"/>
    </reaction>
</comment>
<comment type="subcellular location">
    <subcellularLocation>
        <location evidence="2">Cytoplasm</location>
    </subcellularLocation>
    <text evidence="2">Found in reticular structures and plasma membrane ruffles. Concentrated near the nucleus.</text>
</comment>
<comment type="developmental stage">
    <text evidence="5">In C2C12 cell line, increased expression during myotube formation and differentiation in culture.</text>
</comment>
<comment type="similarity">
    <text evidence="7">Belongs to the protein-tyrosine phosphatase family. Non-receptor class myotubularin subfamily.</text>
</comment>
<comment type="sequence caution" evidence="7">
    <conflict type="erroneous initiation">
        <sequence resource="EMBL-CDS" id="AAH18294"/>
    </conflict>
</comment>
<accession>Q8VEL2</accession>
<proteinExistence type="evidence at protein level"/>